<accession>Q33500</accession>
<accession>O03362</accession>
<accession>Q9T575</accession>
<keyword id="KW-0249">Electron transport</keyword>
<keyword id="KW-0349">Heme</keyword>
<keyword id="KW-0408">Iron</keyword>
<keyword id="KW-0472">Membrane</keyword>
<keyword id="KW-0479">Metal-binding</keyword>
<keyword id="KW-0496">Mitochondrion</keyword>
<keyword id="KW-0999">Mitochondrion inner membrane</keyword>
<keyword id="KW-0679">Respiratory chain</keyword>
<keyword id="KW-0812">Transmembrane</keyword>
<keyword id="KW-1133">Transmembrane helix</keyword>
<keyword id="KW-0813">Transport</keyword>
<keyword id="KW-0830">Ubiquinone</keyword>
<evidence type="ECO:0000250" key="1"/>
<evidence type="ECO:0000250" key="2">
    <source>
        <dbReference type="UniProtKB" id="P00157"/>
    </source>
</evidence>
<evidence type="ECO:0000255" key="3">
    <source>
        <dbReference type="PROSITE-ProRule" id="PRU00967"/>
    </source>
</evidence>
<evidence type="ECO:0000255" key="4">
    <source>
        <dbReference type="PROSITE-ProRule" id="PRU00968"/>
    </source>
</evidence>
<evidence type="ECO:0000305" key="5"/>
<name>CYB_HIPAM</name>
<reference key="1">
    <citation type="journal article" date="1994" name="J. Mammal. Evol.">
        <title>Cytochrome b gene of marine mammals: phylogeny and evolution.</title>
        <authorList>
            <person name="Irwin D.M."/>
            <person name="Arnason U."/>
        </authorList>
    </citation>
    <scope>NUCLEOTIDE SEQUENCE [GENOMIC DNA]</scope>
</reference>
<reference key="2">
    <citation type="journal article" date="1997" name="Mol. Biol. Evol.">
        <title>Phylogenetic relationships of artiodactyls and cetaceans as deduced from the comparison of cytochrome b and 12S rRNA mitochondrial sequences.</title>
        <authorList>
            <person name="Montgelard C."/>
            <person name="Catzeflis F.M."/>
            <person name="Douzery E.J.P."/>
        </authorList>
    </citation>
    <scope>NUCLEOTIDE SEQUENCE [GENOMIC DNA]</scope>
    <source>
        <strain>Isolate T-1464 extr. 4907</strain>
    </source>
</reference>
<reference key="3">
    <citation type="journal article" date="1998" name="Proc. R. Soc. B">
        <title>Analyses of mitochondrial genomes strongly support a hippopotamus-whale clade.</title>
        <authorList>
            <person name="Ursing B.M."/>
            <person name="Arnason U."/>
        </authorList>
    </citation>
    <scope>NUCLEOTIDE SEQUENCE [GENOMIC DNA]</scope>
</reference>
<dbReference type="EMBL" id="U07565">
    <property type="protein sequence ID" value="AAA19918.1"/>
    <property type="molecule type" value="Genomic_DNA"/>
</dbReference>
<dbReference type="EMBL" id="Y08813">
    <property type="protein sequence ID" value="CAA70047.1"/>
    <property type="molecule type" value="Genomic_DNA"/>
</dbReference>
<dbReference type="EMBL" id="AJ010957">
    <property type="protein sequence ID" value="CAA09440.1"/>
    <property type="molecule type" value="Genomic_DNA"/>
</dbReference>
<dbReference type="RefSeq" id="NP_008802.1">
    <property type="nucleotide sequence ID" value="NC_000889.1"/>
</dbReference>
<dbReference type="SMR" id="Q33500"/>
<dbReference type="GeneID" id="808671"/>
<dbReference type="CTD" id="4519"/>
<dbReference type="GO" id="GO:0005743">
    <property type="term" value="C:mitochondrial inner membrane"/>
    <property type="evidence" value="ECO:0007669"/>
    <property type="project" value="UniProtKB-SubCell"/>
</dbReference>
<dbReference type="GO" id="GO:0045275">
    <property type="term" value="C:respiratory chain complex III"/>
    <property type="evidence" value="ECO:0007669"/>
    <property type="project" value="InterPro"/>
</dbReference>
<dbReference type="GO" id="GO:0046872">
    <property type="term" value="F:metal ion binding"/>
    <property type="evidence" value="ECO:0007669"/>
    <property type="project" value="UniProtKB-KW"/>
</dbReference>
<dbReference type="GO" id="GO:0008121">
    <property type="term" value="F:ubiquinol-cytochrome-c reductase activity"/>
    <property type="evidence" value="ECO:0007669"/>
    <property type="project" value="InterPro"/>
</dbReference>
<dbReference type="GO" id="GO:0006122">
    <property type="term" value="P:mitochondrial electron transport, ubiquinol to cytochrome c"/>
    <property type="evidence" value="ECO:0007669"/>
    <property type="project" value="TreeGrafter"/>
</dbReference>
<dbReference type="CDD" id="cd00290">
    <property type="entry name" value="cytochrome_b_C"/>
    <property type="match status" value="1"/>
</dbReference>
<dbReference type="CDD" id="cd00284">
    <property type="entry name" value="Cytochrome_b_N"/>
    <property type="match status" value="1"/>
</dbReference>
<dbReference type="FunFam" id="1.20.810.10:FF:000002">
    <property type="entry name" value="Cytochrome b"/>
    <property type="match status" value="1"/>
</dbReference>
<dbReference type="Gene3D" id="1.20.810.10">
    <property type="entry name" value="Cytochrome Bc1 Complex, Chain C"/>
    <property type="match status" value="1"/>
</dbReference>
<dbReference type="InterPro" id="IPR005798">
    <property type="entry name" value="Cyt_b/b6_C"/>
</dbReference>
<dbReference type="InterPro" id="IPR036150">
    <property type="entry name" value="Cyt_b/b6_C_sf"/>
</dbReference>
<dbReference type="InterPro" id="IPR005797">
    <property type="entry name" value="Cyt_b/b6_N"/>
</dbReference>
<dbReference type="InterPro" id="IPR027387">
    <property type="entry name" value="Cytb/b6-like_sf"/>
</dbReference>
<dbReference type="InterPro" id="IPR030689">
    <property type="entry name" value="Cytochrome_b"/>
</dbReference>
<dbReference type="InterPro" id="IPR048260">
    <property type="entry name" value="Cytochrome_b_C_euk/bac"/>
</dbReference>
<dbReference type="InterPro" id="IPR048259">
    <property type="entry name" value="Cytochrome_b_N_euk/bac"/>
</dbReference>
<dbReference type="InterPro" id="IPR016174">
    <property type="entry name" value="Di-haem_cyt_TM"/>
</dbReference>
<dbReference type="PANTHER" id="PTHR19271">
    <property type="entry name" value="CYTOCHROME B"/>
    <property type="match status" value="1"/>
</dbReference>
<dbReference type="PANTHER" id="PTHR19271:SF16">
    <property type="entry name" value="CYTOCHROME B"/>
    <property type="match status" value="1"/>
</dbReference>
<dbReference type="Pfam" id="PF00032">
    <property type="entry name" value="Cytochrom_B_C"/>
    <property type="match status" value="1"/>
</dbReference>
<dbReference type="Pfam" id="PF00033">
    <property type="entry name" value="Cytochrome_B"/>
    <property type="match status" value="1"/>
</dbReference>
<dbReference type="PIRSF" id="PIRSF038885">
    <property type="entry name" value="COB"/>
    <property type="match status" value="1"/>
</dbReference>
<dbReference type="SUPFAM" id="SSF81648">
    <property type="entry name" value="a domain/subunit of cytochrome bc1 complex (Ubiquinol-cytochrome c reductase)"/>
    <property type="match status" value="1"/>
</dbReference>
<dbReference type="SUPFAM" id="SSF81342">
    <property type="entry name" value="Transmembrane di-heme cytochromes"/>
    <property type="match status" value="1"/>
</dbReference>
<dbReference type="PROSITE" id="PS51003">
    <property type="entry name" value="CYTB_CTER"/>
    <property type="match status" value="1"/>
</dbReference>
<dbReference type="PROSITE" id="PS51002">
    <property type="entry name" value="CYTB_NTER"/>
    <property type="match status" value="1"/>
</dbReference>
<proteinExistence type="inferred from homology"/>
<organism>
    <name type="scientific">Hippopotamus amphibius</name>
    <name type="common">Hippopotamus</name>
    <dbReference type="NCBI Taxonomy" id="9833"/>
    <lineage>
        <taxon>Eukaryota</taxon>
        <taxon>Metazoa</taxon>
        <taxon>Chordata</taxon>
        <taxon>Craniata</taxon>
        <taxon>Vertebrata</taxon>
        <taxon>Euteleostomi</taxon>
        <taxon>Mammalia</taxon>
        <taxon>Eutheria</taxon>
        <taxon>Laurasiatheria</taxon>
        <taxon>Artiodactyla</taxon>
        <taxon>Whippomorpha</taxon>
        <taxon>Ancodonta</taxon>
        <taxon>Hippopotamidae</taxon>
        <taxon>Hippopotamus</taxon>
    </lineage>
</organism>
<protein>
    <recommendedName>
        <fullName>Cytochrome b</fullName>
    </recommendedName>
    <alternativeName>
        <fullName>Complex III subunit 3</fullName>
    </alternativeName>
    <alternativeName>
        <fullName>Complex III subunit III</fullName>
    </alternativeName>
    <alternativeName>
        <fullName>Cytochrome b-c1 complex subunit 3</fullName>
    </alternativeName>
    <alternativeName>
        <fullName>Ubiquinol-cytochrome-c reductase complex cytochrome b subunit</fullName>
    </alternativeName>
</protein>
<feature type="chain" id="PRO_0000061040" description="Cytochrome b">
    <location>
        <begin position="1"/>
        <end position="379"/>
    </location>
</feature>
<feature type="transmembrane region" description="Helical" evidence="2">
    <location>
        <begin position="33"/>
        <end position="53"/>
    </location>
</feature>
<feature type="transmembrane region" description="Helical" evidence="2">
    <location>
        <begin position="77"/>
        <end position="98"/>
    </location>
</feature>
<feature type="transmembrane region" description="Helical" evidence="2">
    <location>
        <begin position="113"/>
        <end position="133"/>
    </location>
</feature>
<feature type="transmembrane region" description="Helical" evidence="2">
    <location>
        <begin position="178"/>
        <end position="198"/>
    </location>
</feature>
<feature type="transmembrane region" description="Helical" evidence="2">
    <location>
        <begin position="226"/>
        <end position="246"/>
    </location>
</feature>
<feature type="transmembrane region" description="Helical" evidence="2">
    <location>
        <begin position="288"/>
        <end position="308"/>
    </location>
</feature>
<feature type="transmembrane region" description="Helical" evidence="2">
    <location>
        <begin position="320"/>
        <end position="340"/>
    </location>
</feature>
<feature type="transmembrane region" description="Helical" evidence="2">
    <location>
        <begin position="347"/>
        <end position="367"/>
    </location>
</feature>
<feature type="binding site" description="axial binding residue" evidence="2">
    <location>
        <position position="83"/>
    </location>
    <ligand>
        <name>heme b</name>
        <dbReference type="ChEBI" id="CHEBI:60344"/>
        <label>b562</label>
    </ligand>
    <ligandPart>
        <name>Fe</name>
        <dbReference type="ChEBI" id="CHEBI:18248"/>
    </ligandPart>
</feature>
<feature type="binding site" description="axial binding residue" evidence="2">
    <location>
        <position position="97"/>
    </location>
    <ligand>
        <name>heme b</name>
        <dbReference type="ChEBI" id="CHEBI:60344"/>
        <label>b566</label>
    </ligand>
    <ligandPart>
        <name>Fe</name>
        <dbReference type="ChEBI" id="CHEBI:18248"/>
    </ligandPart>
</feature>
<feature type="binding site" description="axial binding residue" evidence="2">
    <location>
        <position position="182"/>
    </location>
    <ligand>
        <name>heme b</name>
        <dbReference type="ChEBI" id="CHEBI:60344"/>
        <label>b562</label>
    </ligand>
    <ligandPart>
        <name>Fe</name>
        <dbReference type="ChEBI" id="CHEBI:18248"/>
    </ligandPart>
</feature>
<feature type="binding site" description="axial binding residue" evidence="2">
    <location>
        <position position="196"/>
    </location>
    <ligand>
        <name>heme b</name>
        <dbReference type="ChEBI" id="CHEBI:60344"/>
        <label>b566</label>
    </ligand>
    <ligandPart>
        <name>Fe</name>
        <dbReference type="ChEBI" id="CHEBI:18248"/>
    </ligandPart>
</feature>
<feature type="binding site" evidence="2">
    <location>
        <position position="201"/>
    </location>
    <ligand>
        <name>a ubiquinone</name>
        <dbReference type="ChEBI" id="CHEBI:16389"/>
    </ligand>
</feature>
<feature type="sequence conflict" description="In Ref. 3; CAA09440." evidence="5" ref="3">
    <original>Y</original>
    <variation>H</variation>
    <location>
        <position position="107"/>
    </location>
</feature>
<feature type="sequence conflict" description="In Ref. 1; AAA19918." evidence="5" ref="1">
    <original>V</original>
    <variation>I</variation>
    <location>
        <position position="188"/>
    </location>
</feature>
<feature type="sequence conflict" description="In Ref. 1; AAA19918." evidence="5" ref="1">
    <original>N</original>
    <variation>K</variation>
    <location>
        <position position="207"/>
    </location>
</feature>
<feature type="sequence conflict" description="In Ref. 1; AAA19918." evidence="5" ref="1">
    <original>A</original>
    <variation>T</variation>
    <location>
        <position position="246"/>
    </location>
</feature>
<feature type="sequence conflict" description="In Ref. 1; AAA19918." evidence="5" ref="1">
    <original>V</original>
    <variation>L</variation>
    <location>
        <position position="353"/>
    </location>
</feature>
<geneLocation type="mitochondrion"/>
<sequence length="379" mass="42452">MTNIRKSHPLMKIINDAFVDLPAPSNISSWWNFGSLLGVCLILQILTGLFLAMHYTPDTLTAFSSVTHICRDVNYGWVIRYMHANGASIFFICLFTHVGRGLYYGSYTFLETWNIGVILLLTTMATAFMGYVLPWGQMSFWGATVITNLLSAIPYIGTDLVEWIWGGFSVDKATLTRFFAFHFILPFVITALAIVHLLFLHETGSNNPTGIPSNADKIPFHPYYTIKDILGILLLMTTLLTLTLFAPDLLGDPDNYTPANPLSTPPHIKPEWYFLFAYAILRSIPNKLGGVLALALSILILALIPMLHTSKQRSLMFRPLSQCLFWALIADLLTLTWIGGQPVEHPFIIIGQVASILYFLLILVLMPVAGIIENKLLKW</sequence>
<gene>
    <name type="primary">MT-CYB</name>
    <name type="synonym">COB</name>
    <name type="synonym">CYTB</name>
    <name type="synonym">MTCYB</name>
</gene>
<comment type="function">
    <text evidence="2">Component of the ubiquinol-cytochrome c reductase complex (complex III or cytochrome b-c1 complex) that is part of the mitochondrial respiratory chain. The b-c1 complex mediates electron transfer from ubiquinol to cytochrome c. Contributes to the generation of a proton gradient across the mitochondrial membrane that is then used for ATP synthesis.</text>
</comment>
<comment type="cofactor">
    <cofactor evidence="2">
        <name>heme b</name>
        <dbReference type="ChEBI" id="CHEBI:60344"/>
    </cofactor>
    <text evidence="2">Binds 2 heme b groups non-covalently.</text>
</comment>
<comment type="subunit">
    <text evidence="2">The cytochrome bc1 complex contains 11 subunits: 3 respiratory subunits (MT-CYB, CYC1 and UQCRFS1), 2 core proteins (UQCRC1 and UQCRC2) and 6 low-molecular weight proteins (UQCRH/QCR6, UQCRB/QCR7, UQCRQ/QCR8, UQCR10/QCR9, UQCR11/QCR10 and a cleavage product of UQCRFS1). This cytochrome bc1 complex then forms a dimer.</text>
</comment>
<comment type="subcellular location">
    <subcellularLocation>
        <location evidence="2">Mitochondrion inner membrane</location>
        <topology evidence="2">Multi-pass membrane protein</topology>
    </subcellularLocation>
</comment>
<comment type="miscellaneous">
    <text evidence="1">Heme 1 (or BL or b562) is low-potential and absorbs at about 562 nm, and heme 2 (or BH or b566) is high-potential and absorbs at about 566 nm.</text>
</comment>
<comment type="similarity">
    <text evidence="3 4">Belongs to the cytochrome b family.</text>
</comment>
<comment type="caution">
    <text evidence="2">The full-length protein contains only eight transmembrane helices, not nine as predicted by bioinformatics tools.</text>
</comment>